<dbReference type="EMBL" id="AP009351">
    <property type="protein sequence ID" value="BAF67092.1"/>
    <property type="status" value="ALT_INIT"/>
    <property type="molecule type" value="Genomic_DNA"/>
</dbReference>
<dbReference type="RefSeq" id="WP_000402803.1">
    <property type="nucleotide sequence ID" value="NZ_JBBIAE010000002.1"/>
</dbReference>
<dbReference type="SMR" id="A6QFG0"/>
<dbReference type="GeneID" id="98345271"/>
<dbReference type="KEGG" id="sae:NWMN_0820"/>
<dbReference type="HOGENOM" id="CLU_082058_3_1_9"/>
<dbReference type="Proteomes" id="UP000006386">
    <property type="component" value="Chromosome"/>
</dbReference>
<dbReference type="GO" id="GO:0005886">
    <property type="term" value="C:plasma membrane"/>
    <property type="evidence" value="ECO:0007669"/>
    <property type="project" value="UniProtKB-SubCell"/>
</dbReference>
<dbReference type="GO" id="GO:0015297">
    <property type="term" value="F:antiporter activity"/>
    <property type="evidence" value="ECO:0007669"/>
    <property type="project" value="UniProtKB-KW"/>
</dbReference>
<dbReference type="GO" id="GO:0008324">
    <property type="term" value="F:monoatomic cation transmembrane transporter activity"/>
    <property type="evidence" value="ECO:0007669"/>
    <property type="project" value="InterPro"/>
</dbReference>
<dbReference type="GO" id="GO:1902600">
    <property type="term" value="P:proton transmembrane transport"/>
    <property type="evidence" value="ECO:0007669"/>
    <property type="project" value="UniProtKB-KW"/>
</dbReference>
<dbReference type="GO" id="GO:0006814">
    <property type="term" value="P:sodium ion transport"/>
    <property type="evidence" value="ECO:0007669"/>
    <property type="project" value="UniProtKB-KW"/>
</dbReference>
<dbReference type="Gene3D" id="1.10.287.3510">
    <property type="match status" value="1"/>
</dbReference>
<dbReference type="InterPro" id="IPR050601">
    <property type="entry name" value="CPA3_antiporter_subunitC"/>
</dbReference>
<dbReference type="InterPro" id="IPR006673">
    <property type="entry name" value="Mnh_C1_su"/>
</dbReference>
<dbReference type="InterPro" id="IPR039428">
    <property type="entry name" value="NUOK/Mnh_C1-like"/>
</dbReference>
<dbReference type="NCBIfam" id="TIGR00941">
    <property type="entry name" value="2a6301s03"/>
    <property type="match status" value="1"/>
</dbReference>
<dbReference type="NCBIfam" id="NF006372">
    <property type="entry name" value="PRK08600.1"/>
    <property type="match status" value="1"/>
</dbReference>
<dbReference type="NCBIfam" id="NF006573">
    <property type="entry name" value="PRK09094.1"/>
    <property type="match status" value="1"/>
</dbReference>
<dbReference type="NCBIfam" id="NF009303">
    <property type="entry name" value="PRK12660.1"/>
    <property type="match status" value="1"/>
</dbReference>
<dbReference type="PANTHER" id="PTHR34583">
    <property type="entry name" value="ANTIPORTER SUBUNIT MNHC2-RELATED"/>
    <property type="match status" value="1"/>
</dbReference>
<dbReference type="PANTHER" id="PTHR34583:SF2">
    <property type="entry name" value="ANTIPORTER SUBUNIT MNHC2-RELATED"/>
    <property type="match status" value="1"/>
</dbReference>
<dbReference type="Pfam" id="PF00420">
    <property type="entry name" value="Oxidored_q2"/>
    <property type="match status" value="1"/>
</dbReference>
<evidence type="ECO:0000250" key="1"/>
<evidence type="ECO:0000255" key="2"/>
<evidence type="ECO:0000305" key="3"/>
<reference key="1">
    <citation type="journal article" date="2008" name="J. Bacteriol.">
        <title>Genome sequence of Staphylococcus aureus strain Newman and comparative analysis of staphylococcal genomes: polymorphism and evolution of two major pathogenicity islands.</title>
        <authorList>
            <person name="Baba T."/>
            <person name="Bae T."/>
            <person name="Schneewind O."/>
            <person name="Takeuchi F."/>
            <person name="Hiramatsu K."/>
        </authorList>
    </citation>
    <scope>NUCLEOTIDE SEQUENCE [LARGE SCALE GENOMIC DNA]</scope>
    <source>
        <strain>Newman</strain>
    </source>
</reference>
<comment type="function">
    <text evidence="1">Mnh complex is a Na(+)/H(+) antiporter involved in Na(+) excretion.</text>
</comment>
<comment type="subunit">
    <text evidence="1">May form a heterooligomeric complex that consists of seven subunits: mnhA1, mnhB1, mnhC1, mnhD1, mnhE1, mnhF1 and mnhG1.</text>
</comment>
<comment type="subcellular location">
    <subcellularLocation>
        <location evidence="3">Cell membrane</location>
        <topology evidence="3">Multi-pass membrane protein</topology>
    </subcellularLocation>
</comment>
<comment type="similarity">
    <text evidence="3">Belongs to the CPA3 antiporters (TC 2.A.63) subunit C family.</text>
</comment>
<comment type="sequence caution" evidence="3">
    <conflict type="erroneous initiation">
        <sequence resource="EMBL-CDS" id="BAF67092"/>
    </conflict>
</comment>
<accession>A6QFG0</accession>
<proteinExistence type="inferred from homology"/>
<keyword id="KW-0050">Antiport</keyword>
<keyword id="KW-1003">Cell membrane</keyword>
<keyword id="KW-0375">Hydrogen ion transport</keyword>
<keyword id="KW-0406">Ion transport</keyword>
<keyword id="KW-0472">Membrane</keyword>
<keyword id="KW-0915">Sodium</keyword>
<keyword id="KW-0739">Sodium transport</keyword>
<keyword id="KW-0812">Transmembrane</keyword>
<keyword id="KW-1133">Transmembrane helix</keyword>
<keyword id="KW-0813">Transport</keyword>
<name>MNHC1_STAAE</name>
<protein>
    <recommendedName>
        <fullName>Na(+)/H(+) antiporter subunit C1</fullName>
    </recommendedName>
    <alternativeName>
        <fullName>Mnh complex subunit C1</fullName>
    </alternativeName>
</protein>
<organism>
    <name type="scientific">Staphylococcus aureus (strain Newman)</name>
    <dbReference type="NCBI Taxonomy" id="426430"/>
    <lineage>
        <taxon>Bacteria</taxon>
        <taxon>Bacillati</taxon>
        <taxon>Bacillota</taxon>
        <taxon>Bacilli</taxon>
        <taxon>Bacillales</taxon>
        <taxon>Staphylococcaceae</taxon>
        <taxon>Staphylococcus</taxon>
    </lineage>
</organism>
<sequence length="113" mass="12293">MEIIMIFVSGILTAISVYLVLSKSLIRIVMGTTLLTHAANLFLITMGGLKHGTVPIYEANVKSYVDPIPQALILTAIVIAFATTAFFLVLAFRTYKELGTDNVESMKGVPEDD</sequence>
<feature type="chain" id="PRO_0000372122" description="Na(+)/H(+) antiporter subunit C1">
    <location>
        <begin position="1"/>
        <end position="113"/>
    </location>
</feature>
<feature type="transmembrane region" description="Helical" evidence="2">
    <location>
        <begin position="6"/>
        <end position="26"/>
    </location>
</feature>
<feature type="transmembrane region" description="Helical" evidence="2">
    <location>
        <begin position="28"/>
        <end position="48"/>
    </location>
</feature>
<feature type="transmembrane region" description="Helical" evidence="2">
    <location>
        <begin position="72"/>
        <end position="92"/>
    </location>
</feature>
<gene>
    <name type="primary">mnhC1</name>
    <name type="ordered locus">NWMN_0820</name>
</gene>